<reference key="1">
    <citation type="journal article" date="2003" name="Nat. Genet.">
        <title>Comparative analysis of the genome sequences of Bordetella pertussis, Bordetella parapertussis and Bordetella bronchiseptica.</title>
        <authorList>
            <person name="Parkhill J."/>
            <person name="Sebaihia M."/>
            <person name="Preston A."/>
            <person name="Murphy L.D."/>
            <person name="Thomson N.R."/>
            <person name="Harris D.E."/>
            <person name="Holden M.T.G."/>
            <person name="Churcher C.M."/>
            <person name="Bentley S.D."/>
            <person name="Mungall K.L."/>
            <person name="Cerdeno-Tarraga A.-M."/>
            <person name="Temple L."/>
            <person name="James K.D."/>
            <person name="Harris B."/>
            <person name="Quail M.A."/>
            <person name="Achtman M."/>
            <person name="Atkin R."/>
            <person name="Baker S."/>
            <person name="Basham D."/>
            <person name="Bason N."/>
            <person name="Cherevach I."/>
            <person name="Chillingworth T."/>
            <person name="Collins M."/>
            <person name="Cronin A."/>
            <person name="Davis P."/>
            <person name="Doggett J."/>
            <person name="Feltwell T."/>
            <person name="Goble A."/>
            <person name="Hamlin N."/>
            <person name="Hauser H."/>
            <person name="Holroyd S."/>
            <person name="Jagels K."/>
            <person name="Leather S."/>
            <person name="Moule S."/>
            <person name="Norberczak H."/>
            <person name="O'Neil S."/>
            <person name="Ormond D."/>
            <person name="Price C."/>
            <person name="Rabbinowitsch E."/>
            <person name="Rutter S."/>
            <person name="Sanders M."/>
            <person name="Saunders D."/>
            <person name="Seeger K."/>
            <person name="Sharp S."/>
            <person name="Simmonds M."/>
            <person name="Skelton J."/>
            <person name="Squares R."/>
            <person name="Squares S."/>
            <person name="Stevens K."/>
            <person name="Unwin L."/>
            <person name="Whitehead S."/>
            <person name="Barrell B.G."/>
            <person name="Maskell D.J."/>
        </authorList>
    </citation>
    <scope>NUCLEOTIDE SEQUENCE [LARGE SCALE GENOMIC DNA]</scope>
    <source>
        <strain>12822 / ATCC BAA-587 / NCTC 13253</strain>
    </source>
</reference>
<protein>
    <recommendedName>
        <fullName evidence="1">Cell division protein ZapD</fullName>
    </recommendedName>
    <alternativeName>
        <fullName evidence="1">Z ring-associated protein D</fullName>
    </alternativeName>
</protein>
<feature type="chain" id="PRO_0000211662" description="Cell division protein ZapD">
    <location>
        <begin position="1"/>
        <end position="253"/>
    </location>
</feature>
<gene>
    <name evidence="1" type="primary">zapD</name>
    <name type="ordered locus">BPP3960</name>
</gene>
<accession>P67692</accession>
<accession>Q7VSV6</accession>
<accession>Q7W3R9</accession>
<accession>Q7WF47</accession>
<keyword id="KW-0131">Cell cycle</keyword>
<keyword id="KW-0132">Cell division</keyword>
<keyword id="KW-0963">Cytoplasm</keyword>
<keyword id="KW-0717">Septation</keyword>
<dbReference type="EMBL" id="BX640435">
    <property type="protein sequence ID" value="CAE39243.1"/>
    <property type="molecule type" value="Genomic_DNA"/>
</dbReference>
<dbReference type="SMR" id="P67692"/>
<dbReference type="KEGG" id="bpa:BPP3960"/>
<dbReference type="HOGENOM" id="CLU_076303_0_1_4"/>
<dbReference type="Proteomes" id="UP000001421">
    <property type="component" value="Chromosome"/>
</dbReference>
<dbReference type="GO" id="GO:0032153">
    <property type="term" value="C:cell division site"/>
    <property type="evidence" value="ECO:0007669"/>
    <property type="project" value="TreeGrafter"/>
</dbReference>
<dbReference type="GO" id="GO:0005737">
    <property type="term" value="C:cytoplasm"/>
    <property type="evidence" value="ECO:0007669"/>
    <property type="project" value="UniProtKB-SubCell"/>
</dbReference>
<dbReference type="GO" id="GO:0000917">
    <property type="term" value="P:division septum assembly"/>
    <property type="evidence" value="ECO:0007669"/>
    <property type="project" value="UniProtKB-KW"/>
</dbReference>
<dbReference type="GO" id="GO:0043093">
    <property type="term" value="P:FtsZ-dependent cytokinesis"/>
    <property type="evidence" value="ECO:0007669"/>
    <property type="project" value="UniProtKB-UniRule"/>
</dbReference>
<dbReference type="Gene3D" id="1.10.3900.10">
    <property type="entry name" value="YacF-like"/>
    <property type="match status" value="1"/>
</dbReference>
<dbReference type="Gene3D" id="2.60.440.10">
    <property type="entry name" value="YacF-like domains"/>
    <property type="match status" value="1"/>
</dbReference>
<dbReference type="HAMAP" id="MF_01092">
    <property type="entry name" value="ZapD"/>
    <property type="match status" value="1"/>
</dbReference>
<dbReference type="InterPro" id="IPR009777">
    <property type="entry name" value="ZapD"/>
</dbReference>
<dbReference type="InterPro" id="IPR027462">
    <property type="entry name" value="ZapD_C"/>
</dbReference>
<dbReference type="InterPro" id="IPR036268">
    <property type="entry name" value="ZapD_sf"/>
</dbReference>
<dbReference type="NCBIfam" id="NF003656">
    <property type="entry name" value="PRK05287.1-4"/>
    <property type="match status" value="1"/>
</dbReference>
<dbReference type="PANTHER" id="PTHR39455">
    <property type="entry name" value="CELL DIVISION PROTEIN ZAPD"/>
    <property type="match status" value="1"/>
</dbReference>
<dbReference type="PANTHER" id="PTHR39455:SF1">
    <property type="entry name" value="CELL DIVISION PROTEIN ZAPD"/>
    <property type="match status" value="1"/>
</dbReference>
<dbReference type="Pfam" id="PF07072">
    <property type="entry name" value="ZapD"/>
    <property type="match status" value="1"/>
</dbReference>
<dbReference type="SUPFAM" id="SSF160950">
    <property type="entry name" value="YacF-like"/>
    <property type="match status" value="1"/>
</dbReference>
<sequence length="253" mass="28608">MASVILYEYPFNERIRAYLRLEYLFDRLFFFAREGDARLHQIAVSSLFDLLDASERTDIKGAVLQDLERQRMALVGLRDHPGVAQDALEAMLRDMERVVAALAAQGKTGQALRENEWLVSLRGRLAVPGGATQVDMPSYHAWQNKPESVRCADLQSWLAPLLPLHEGLSMALRLLRESGRRADIAAEQGGYQQMLAGKIYHLLRVWVDPSLGVFPEISANKYMVWIRFSTQDGEVKPQQVSRDVAFQMSLCSS</sequence>
<comment type="function">
    <text evidence="1">Cell division factor that enhances FtsZ-ring assembly. Directly interacts with FtsZ and promotes bundling of FtsZ protofilaments, with a reduction in FtsZ GTPase activity.</text>
</comment>
<comment type="subunit">
    <text evidence="1">Interacts with FtsZ.</text>
</comment>
<comment type="subcellular location">
    <subcellularLocation>
        <location evidence="1">Cytoplasm</location>
    </subcellularLocation>
    <text evidence="1">Localizes to mid-cell in an FtsZ-dependent manner.</text>
</comment>
<comment type="similarity">
    <text evidence="1">Belongs to the ZapD family.</text>
</comment>
<name>ZAPD_BORPA</name>
<evidence type="ECO:0000255" key="1">
    <source>
        <dbReference type="HAMAP-Rule" id="MF_01092"/>
    </source>
</evidence>
<proteinExistence type="inferred from homology"/>
<organism>
    <name type="scientific">Bordetella parapertussis (strain 12822 / ATCC BAA-587 / NCTC 13253)</name>
    <dbReference type="NCBI Taxonomy" id="257311"/>
    <lineage>
        <taxon>Bacteria</taxon>
        <taxon>Pseudomonadati</taxon>
        <taxon>Pseudomonadota</taxon>
        <taxon>Betaproteobacteria</taxon>
        <taxon>Burkholderiales</taxon>
        <taxon>Alcaligenaceae</taxon>
        <taxon>Bordetella</taxon>
    </lineage>
</organism>